<name>YICR_SHIDS</name>
<feature type="chain" id="PRO_0000322704" description="UPF0758 protein YicR">
    <location>
        <begin position="1"/>
        <end position="222"/>
    </location>
</feature>
<feature type="domain" description="MPN" evidence="2">
    <location>
        <begin position="100"/>
        <end position="222"/>
    </location>
</feature>
<feature type="short sequence motif" description="JAMM motif" evidence="2">
    <location>
        <begin position="171"/>
        <end position="184"/>
    </location>
</feature>
<feature type="binding site" evidence="2">
    <location>
        <position position="171"/>
    </location>
    <ligand>
        <name>Zn(2+)</name>
        <dbReference type="ChEBI" id="CHEBI:29105"/>
        <note>catalytic</note>
    </ligand>
</feature>
<feature type="binding site" evidence="2">
    <location>
        <position position="173"/>
    </location>
    <ligand>
        <name>Zn(2+)</name>
        <dbReference type="ChEBI" id="CHEBI:29105"/>
        <note>catalytic</note>
    </ligand>
</feature>
<feature type="binding site" evidence="2">
    <location>
        <position position="184"/>
    </location>
    <ligand>
        <name>Zn(2+)</name>
        <dbReference type="ChEBI" id="CHEBI:29105"/>
        <note>catalytic</note>
    </ligand>
</feature>
<protein>
    <recommendedName>
        <fullName evidence="1">UPF0758 protein YicR</fullName>
    </recommendedName>
</protein>
<gene>
    <name evidence="1" type="primary">yicR</name>
    <name type="ordered locus">SDY_4068</name>
</gene>
<evidence type="ECO:0000255" key="1">
    <source>
        <dbReference type="HAMAP-Rule" id="MF_00018"/>
    </source>
</evidence>
<evidence type="ECO:0000255" key="2">
    <source>
        <dbReference type="PROSITE-ProRule" id="PRU01182"/>
    </source>
</evidence>
<evidence type="ECO:0000305" key="3"/>
<organism>
    <name type="scientific">Shigella dysenteriae serotype 1 (strain Sd197)</name>
    <dbReference type="NCBI Taxonomy" id="300267"/>
    <lineage>
        <taxon>Bacteria</taxon>
        <taxon>Pseudomonadati</taxon>
        <taxon>Pseudomonadota</taxon>
        <taxon>Gammaproteobacteria</taxon>
        <taxon>Enterobacterales</taxon>
        <taxon>Enterobacteriaceae</taxon>
        <taxon>Shigella</taxon>
    </lineage>
</organism>
<reference key="1">
    <citation type="journal article" date="2005" name="Nucleic Acids Res.">
        <title>Genome dynamics and diversity of Shigella species, the etiologic agents of bacillary dysentery.</title>
        <authorList>
            <person name="Yang F."/>
            <person name="Yang J."/>
            <person name="Zhang X."/>
            <person name="Chen L."/>
            <person name="Jiang Y."/>
            <person name="Yan Y."/>
            <person name="Tang X."/>
            <person name="Wang J."/>
            <person name="Xiong Z."/>
            <person name="Dong J."/>
            <person name="Xue Y."/>
            <person name="Zhu Y."/>
            <person name="Xu X."/>
            <person name="Sun L."/>
            <person name="Chen S."/>
            <person name="Nie H."/>
            <person name="Peng J."/>
            <person name="Xu J."/>
            <person name="Wang Y."/>
            <person name="Yuan Z."/>
            <person name="Wen Y."/>
            <person name="Yao Z."/>
            <person name="Shen Y."/>
            <person name="Qiang B."/>
            <person name="Hou Y."/>
            <person name="Yu J."/>
            <person name="Jin Q."/>
        </authorList>
    </citation>
    <scope>NUCLEOTIDE SEQUENCE [LARGE SCALE GENOMIC DNA]</scope>
    <source>
        <strain>Sd197</strain>
    </source>
</reference>
<sequence>MKNNAQLLMPREKMLKFGISALTDVELLALFLRTGTRGKDVLTLAKEMLENFGSLYGLLTSEYEQFSGVHGIGVAKFAQLKGIAELARRYYNVRMREESPLLSPEMTREFLQSQLTGEEREIFMVIFLDSQHRVITHSRIFSGTLNHVEVHPREIIREAIKINASALILAHNHPSGCAEPSKADKLITERIIKSCQFMDLRVLDHIVIGRGEYVSFAERGWI</sequence>
<proteinExistence type="inferred from homology"/>
<keyword id="KW-0378">Hydrolase</keyword>
<keyword id="KW-0479">Metal-binding</keyword>
<keyword id="KW-0482">Metalloprotease</keyword>
<keyword id="KW-0645">Protease</keyword>
<keyword id="KW-1185">Reference proteome</keyword>
<keyword id="KW-0862">Zinc</keyword>
<accession>Q329L9</accession>
<dbReference type="EMBL" id="CP000034">
    <property type="protein sequence ID" value="ABB63986.1"/>
    <property type="status" value="ALT_INIT"/>
    <property type="molecule type" value="Genomic_DNA"/>
</dbReference>
<dbReference type="RefSeq" id="WP_005016687.1">
    <property type="nucleotide sequence ID" value="NC_007606.1"/>
</dbReference>
<dbReference type="RefSeq" id="YP_405477.1">
    <property type="nucleotide sequence ID" value="NC_007606.1"/>
</dbReference>
<dbReference type="SMR" id="Q329L9"/>
<dbReference type="STRING" id="300267.SDY_4068"/>
<dbReference type="EnsemblBacteria" id="ABB63986">
    <property type="protein sequence ID" value="ABB63986"/>
    <property type="gene ID" value="SDY_4068"/>
</dbReference>
<dbReference type="KEGG" id="sdy:SDY_4068"/>
<dbReference type="PATRIC" id="fig|300267.13.peg.4784"/>
<dbReference type="HOGENOM" id="CLU_073529_0_2_6"/>
<dbReference type="Proteomes" id="UP000002716">
    <property type="component" value="Chromosome"/>
</dbReference>
<dbReference type="GO" id="GO:0046872">
    <property type="term" value="F:metal ion binding"/>
    <property type="evidence" value="ECO:0007669"/>
    <property type="project" value="UniProtKB-KW"/>
</dbReference>
<dbReference type="GO" id="GO:0008237">
    <property type="term" value="F:metallopeptidase activity"/>
    <property type="evidence" value="ECO:0007669"/>
    <property type="project" value="UniProtKB-KW"/>
</dbReference>
<dbReference type="GO" id="GO:0006508">
    <property type="term" value="P:proteolysis"/>
    <property type="evidence" value="ECO:0007669"/>
    <property type="project" value="UniProtKB-KW"/>
</dbReference>
<dbReference type="CDD" id="cd08071">
    <property type="entry name" value="MPN_DUF2466"/>
    <property type="match status" value="1"/>
</dbReference>
<dbReference type="Gene3D" id="3.40.140.10">
    <property type="entry name" value="Cytidine Deaminase, domain 2"/>
    <property type="match status" value="1"/>
</dbReference>
<dbReference type="HAMAP" id="MF_00018">
    <property type="entry name" value="UPF0758_YicR"/>
    <property type="match status" value="1"/>
</dbReference>
<dbReference type="InterPro" id="IPR037518">
    <property type="entry name" value="MPN"/>
</dbReference>
<dbReference type="InterPro" id="IPR025657">
    <property type="entry name" value="RadC_JAB"/>
</dbReference>
<dbReference type="InterPro" id="IPR010994">
    <property type="entry name" value="RuvA_2-like"/>
</dbReference>
<dbReference type="InterPro" id="IPR001405">
    <property type="entry name" value="UPF0758"/>
</dbReference>
<dbReference type="InterPro" id="IPR020891">
    <property type="entry name" value="UPF0758_CS"/>
</dbReference>
<dbReference type="InterPro" id="IPR046778">
    <property type="entry name" value="UPF0758_N"/>
</dbReference>
<dbReference type="InterPro" id="IPR022820">
    <property type="entry name" value="UPF0758_YicR"/>
</dbReference>
<dbReference type="NCBIfam" id="NF000642">
    <property type="entry name" value="PRK00024.1"/>
    <property type="match status" value="1"/>
</dbReference>
<dbReference type="NCBIfam" id="TIGR00608">
    <property type="entry name" value="radc"/>
    <property type="match status" value="1"/>
</dbReference>
<dbReference type="PANTHER" id="PTHR30471">
    <property type="entry name" value="DNA REPAIR PROTEIN RADC"/>
    <property type="match status" value="1"/>
</dbReference>
<dbReference type="PANTHER" id="PTHR30471:SF3">
    <property type="entry name" value="UPF0758 PROTEIN YEES-RELATED"/>
    <property type="match status" value="1"/>
</dbReference>
<dbReference type="Pfam" id="PF04002">
    <property type="entry name" value="RadC"/>
    <property type="match status" value="1"/>
</dbReference>
<dbReference type="Pfam" id="PF20582">
    <property type="entry name" value="UPF0758_N"/>
    <property type="match status" value="1"/>
</dbReference>
<dbReference type="SUPFAM" id="SSF47781">
    <property type="entry name" value="RuvA domain 2-like"/>
    <property type="match status" value="1"/>
</dbReference>
<dbReference type="PROSITE" id="PS50249">
    <property type="entry name" value="MPN"/>
    <property type="match status" value="1"/>
</dbReference>
<dbReference type="PROSITE" id="PS01302">
    <property type="entry name" value="UPF0758"/>
    <property type="match status" value="1"/>
</dbReference>
<comment type="similarity">
    <text evidence="1">Belongs to the UPF0758 family. YicR subfamily.</text>
</comment>
<comment type="sequence caution" evidence="3">
    <conflict type="erroneous initiation">
        <sequence resource="EMBL-CDS" id="ABB63986"/>
    </conflict>
</comment>